<reference key="1">
    <citation type="submission" date="2005-12" db="EMBL/GenBank/DDBJ databases">
        <authorList>
            <person name="Neumann N.G."/>
            <person name="Kilimann M.W."/>
        </authorList>
    </citation>
    <scope>NUCLEOTIDE SEQUENCE [MRNA]</scope>
    <source>
        <tissue>Brain</tissue>
    </source>
</reference>
<organism>
    <name type="scientific">Sus scrofa</name>
    <name type="common">Pig</name>
    <dbReference type="NCBI Taxonomy" id="9823"/>
    <lineage>
        <taxon>Eukaryota</taxon>
        <taxon>Metazoa</taxon>
        <taxon>Chordata</taxon>
        <taxon>Craniata</taxon>
        <taxon>Vertebrata</taxon>
        <taxon>Euteleostomi</taxon>
        <taxon>Mammalia</taxon>
        <taxon>Eutheria</taxon>
        <taxon>Laurasiatheria</taxon>
        <taxon>Artiodactyla</taxon>
        <taxon>Suina</taxon>
        <taxon>Suidae</taxon>
        <taxon>Sus</taxon>
    </lineage>
</organism>
<comment type="subunit">
    <text evidence="1">Interacts with GLUL (By similarity). Cell projection, dendrite. Cell projection, dendritic spine (By similarity).</text>
</comment>
<comment type="subcellular location">
    <subcellularLocation>
        <location evidence="1">Cytoplasm</location>
    </subcellularLocation>
    <subcellularLocation>
        <location>Cell projection</location>
        <location>Dendrite</location>
    </subcellularLocation>
    <subcellularLocation>
        <location evidence="1">Cell projection</location>
        <location evidence="1">Dendritic spine</location>
    </subcellularLocation>
</comment>
<comment type="PTM">
    <text evidence="1">Phosphorylated.</text>
</comment>
<comment type="similarity">
    <text evidence="6">Belongs to the paralemmin family.</text>
</comment>
<feature type="chain" id="PRO_0000262530" description="Palmdelphin">
    <location>
        <begin position="1"/>
        <end position="551"/>
    </location>
</feature>
<feature type="region of interest" description="Disordered" evidence="5">
    <location>
        <begin position="247"/>
        <end position="393"/>
    </location>
</feature>
<feature type="region of interest" description="Disordered" evidence="5">
    <location>
        <begin position="450"/>
        <end position="529"/>
    </location>
</feature>
<feature type="coiled-coil region" evidence="4">
    <location>
        <begin position="2"/>
        <end position="106"/>
    </location>
</feature>
<feature type="compositionally biased region" description="Basic and acidic residues" evidence="5">
    <location>
        <begin position="247"/>
        <end position="259"/>
    </location>
</feature>
<feature type="compositionally biased region" description="Basic and acidic residues" evidence="5">
    <location>
        <begin position="484"/>
        <end position="495"/>
    </location>
</feature>
<feature type="modified residue" description="N-acetylmethionine" evidence="3">
    <location>
        <position position="1"/>
    </location>
</feature>
<feature type="modified residue" description="Phosphoserine" evidence="3">
    <location>
        <position position="135"/>
    </location>
</feature>
<feature type="modified residue" description="Phosphothreonine" evidence="2">
    <location>
        <position position="271"/>
    </location>
</feature>
<feature type="modified residue" description="Phosphoserine" evidence="3">
    <location>
        <position position="321"/>
    </location>
</feature>
<feature type="modified residue" description="Phosphoserine" evidence="2">
    <location>
        <position position="370"/>
    </location>
</feature>
<feature type="modified residue" description="Phosphoserine" evidence="3">
    <location>
        <position position="384"/>
    </location>
</feature>
<feature type="modified residue" description="Phosphoserine" evidence="2">
    <location>
        <position position="385"/>
    </location>
</feature>
<feature type="modified residue" description="Phosphoserine" evidence="3">
    <location>
        <position position="498"/>
    </location>
</feature>
<feature type="modified residue" description="Phosphoserine" evidence="3">
    <location>
        <position position="515"/>
    </location>
</feature>
<feature type="modified residue" description="Phosphoserine" evidence="3">
    <location>
        <position position="520"/>
    </location>
</feature>
<feature type="cross-link" description="Glycyl lysine isopeptide (Lys-Gly) (interchain with G-Cter in SUMO2)" evidence="3">
    <location>
        <position position="125"/>
    </location>
</feature>
<feature type="cross-link" description="Glycyl lysine isopeptide (Lys-Gly) (interchain with G-Cter in SUMO1); alternate" evidence="3">
    <location>
        <position position="179"/>
    </location>
</feature>
<feature type="cross-link" description="Glycyl lysine isopeptide (Lys-Gly) (interchain with G-Cter in SUMO2); alternate" evidence="3">
    <location>
        <position position="179"/>
    </location>
</feature>
<name>PALMD_PIG</name>
<proteinExistence type="evidence at transcript level"/>
<keyword id="KW-0007">Acetylation</keyword>
<keyword id="KW-0966">Cell projection</keyword>
<keyword id="KW-0175">Coiled coil</keyword>
<keyword id="KW-0963">Cytoplasm</keyword>
<keyword id="KW-1017">Isopeptide bond</keyword>
<keyword id="KW-0597">Phosphoprotein</keyword>
<keyword id="KW-1185">Reference proteome</keyword>
<keyword id="KW-0770">Synapse</keyword>
<keyword id="KW-0832">Ubl conjugation</keyword>
<sequence>MEEAELVKERLQAITDKRKIQEEISQKRLKIEEEKLRHQHLKKKALREKWLLDGIGSRKEQEEMKKQNQQDQHQIQVLEQSILRLEKEIQDLEKAELQISTNEEAILKKLKSVERTTEDIIRSVKVEKEETSGASIEDIYANIPDLPKSYVPSRLRKERNEGIEDDEQNRKALYAMEIKVEKDLKTGESTVLSSIPLPSDDFKGTGIKVYDDGQKSVYAVSSNHSAAYNGTDGLAPVEVEDLLRQASERNSKSPTEYHDPVYANPFCRPTTPQREKATPGPNFQERIKMKARGLGKDMNGSIHTMNNGLSEERGSSVNHISPIRPIPHPRSMTQQAEERPHSPQKRQMTPWEESDVTQDKCAPSAKSQLSPGEAPVGKSERQGSSPTCQEDEEDVRYNIVHSLPSDVEDTEPVTMIFMGYQRADDSEEEKKLLTGYDGIIRAELVVIDDEEEEGEGEAEKPSYHPIAPHSQVFQPAKPTPLPRKRAEVNPHENTNHKSPHKNSISLKEQEESLGSPIHQSPLDIQIAGDGTEDPSLTALRMRMAKLGKKVI</sequence>
<dbReference type="EMBL" id="DQ322458">
    <property type="protein sequence ID" value="ABC49999.1"/>
    <property type="molecule type" value="mRNA"/>
</dbReference>
<dbReference type="RefSeq" id="NP_001033734.1">
    <property type="nucleotide sequence ID" value="NM_001038645.2"/>
</dbReference>
<dbReference type="SMR" id="Q2MJV9"/>
<dbReference type="FunCoup" id="Q2MJV9">
    <property type="interactions" value="136"/>
</dbReference>
<dbReference type="STRING" id="9823.ENSSSCP00000007329"/>
<dbReference type="PaxDb" id="9823-ENSSSCP00000007329"/>
<dbReference type="PeptideAtlas" id="Q2MJV9"/>
<dbReference type="Ensembl" id="ENSSSCT00110044343">
    <property type="protein sequence ID" value="ENSSSCP00110031268"/>
    <property type="gene ID" value="ENSSSCG00110022846"/>
</dbReference>
<dbReference type="GeneID" id="654413"/>
<dbReference type="KEGG" id="ssc:654413"/>
<dbReference type="CTD" id="54873"/>
<dbReference type="eggNOG" id="ENOG502QVMH">
    <property type="taxonomic scope" value="Eukaryota"/>
</dbReference>
<dbReference type="InParanoid" id="Q2MJV9"/>
<dbReference type="OrthoDB" id="9937247at2759"/>
<dbReference type="Proteomes" id="UP000008227">
    <property type="component" value="Unplaced"/>
</dbReference>
<dbReference type="Proteomes" id="UP000314985">
    <property type="component" value="Unplaced"/>
</dbReference>
<dbReference type="Proteomes" id="UP000694570">
    <property type="component" value="Unplaced"/>
</dbReference>
<dbReference type="Proteomes" id="UP000694571">
    <property type="component" value="Unplaced"/>
</dbReference>
<dbReference type="Proteomes" id="UP000694720">
    <property type="component" value="Unplaced"/>
</dbReference>
<dbReference type="Proteomes" id="UP000694722">
    <property type="component" value="Unplaced"/>
</dbReference>
<dbReference type="Proteomes" id="UP000694723">
    <property type="component" value="Unplaced"/>
</dbReference>
<dbReference type="Proteomes" id="UP000694724">
    <property type="component" value="Unplaced"/>
</dbReference>
<dbReference type="Proteomes" id="UP000694725">
    <property type="component" value="Unplaced"/>
</dbReference>
<dbReference type="Proteomes" id="UP000694726">
    <property type="component" value="Unplaced"/>
</dbReference>
<dbReference type="Proteomes" id="UP000694727">
    <property type="component" value="Unplaced"/>
</dbReference>
<dbReference type="Proteomes" id="UP000694728">
    <property type="component" value="Unplaced"/>
</dbReference>
<dbReference type="GO" id="GO:0005737">
    <property type="term" value="C:cytoplasm"/>
    <property type="evidence" value="ECO:0000318"/>
    <property type="project" value="GO_Central"/>
</dbReference>
<dbReference type="GO" id="GO:0043197">
    <property type="term" value="C:dendritic spine"/>
    <property type="evidence" value="ECO:0007669"/>
    <property type="project" value="UniProtKB-SubCell"/>
</dbReference>
<dbReference type="GO" id="GO:0016020">
    <property type="term" value="C:membrane"/>
    <property type="evidence" value="ECO:0007669"/>
    <property type="project" value="InterPro"/>
</dbReference>
<dbReference type="GO" id="GO:0008360">
    <property type="term" value="P:regulation of cell shape"/>
    <property type="evidence" value="ECO:0007669"/>
    <property type="project" value="InterPro"/>
</dbReference>
<dbReference type="InterPro" id="IPR004965">
    <property type="entry name" value="Paralemmin"/>
</dbReference>
<dbReference type="PANTHER" id="PTHR46881">
    <property type="entry name" value="PALMDELPHIN"/>
    <property type="match status" value="1"/>
</dbReference>
<dbReference type="PANTHER" id="PTHR46881:SF1">
    <property type="entry name" value="PALMDELPHIN"/>
    <property type="match status" value="1"/>
</dbReference>
<dbReference type="Pfam" id="PF03285">
    <property type="entry name" value="Paralemmin"/>
    <property type="match status" value="2"/>
</dbReference>
<accession>Q2MJV9</accession>
<protein>
    <recommendedName>
        <fullName>Palmdelphin</fullName>
    </recommendedName>
</protein>
<gene>
    <name type="primary">PALMD</name>
</gene>
<evidence type="ECO:0000250" key="1"/>
<evidence type="ECO:0000250" key="2">
    <source>
        <dbReference type="UniProtKB" id="Q9JHU2"/>
    </source>
</evidence>
<evidence type="ECO:0000250" key="3">
    <source>
        <dbReference type="UniProtKB" id="Q9NP74"/>
    </source>
</evidence>
<evidence type="ECO:0000255" key="4"/>
<evidence type="ECO:0000256" key="5">
    <source>
        <dbReference type="SAM" id="MobiDB-lite"/>
    </source>
</evidence>
<evidence type="ECO:0000305" key="6"/>